<accession>Q69AB2</accession>
<accession>Q78Y03</accession>
<accession>Q80YE0</accession>
<accession>Q9CQ96</accession>
<proteinExistence type="evidence at protein level"/>
<evidence type="ECO:0000250" key="1"/>
<evidence type="ECO:0000255" key="2">
    <source>
        <dbReference type="PROSITE-ProRule" id="PRU00691"/>
    </source>
</evidence>
<evidence type="ECO:0000269" key="3">
    <source>
    </source>
</evidence>
<evidence type="ECO:0000269" key="4">
    <source>
    </source>
</evidence>
<evidence type="ECO:0000303" key="5">
    <source>
    </source>
</evidence>
<evidence type="ECO:0000305" key="6"/>
<dbReference type="EMBL" id="AY495589">
    <property type="protein sequence ID" value="AAS72906.1"/>
    <property type="molecule type" value="mRNA"/>
</dbReference>
<dbReference type="EMBL" id="AK006683">
    <property type="protein sequence ID" value="BAB24702.2"/>
    <property type="status" value="ALT_INIT"/>
    <property type="molecule type" value="mRNA"/>
</dbReference>
<dbReference type="EMBL" id="AK015240">
    <property type="protein sequence ID" value="BAB29760.2"/>
    <property type="molecule type" value="mRNA"/>
</dbReference>
<dbReference type="EMBL" id="BC049564">
    <property type="protein sequence ID" value="AAH49564.1"/>
    <property type="molecule type" value="mRNA"/>
</dbReference>
<dbReference type="CCDS" id="CCDS18208.1">
    <molecule id="Q69AB2-1"/>
</dbReference>
<dbReference type="RefSeq" id="NP_080408.2">
    <molecule id="Q69AB2-1"/>
    <property type="nucleotide sequence ID" value="NM_026132.2"/>
</dbReference>
<dbReference type="SMR" id="Q69AB2"/>
<dbReference type="FunCoup" id="Q69AB2">
    <property type="interactions" value="10"/>
</dbReference>
<dbReference type="STRING" id="10090.ENSMUSP00000099961"/>
<dbReference type="iPTMnet" id="Q69AB2"/>
<dbReference type="PhosphoSitePlus" id="Q69AB2"/>
<dbReference type="jPOST" id="Q69AB2"/>
<dbReference type="PaxDb" id="10090-ENSMUSP00000099961"/>
<dbReference type="ProteomicsDB" id="298398">
    <molecule id="Q69AB2-1"/>
</dbReference>
<dbReference type="ProteomicsDB" id="298399">
    <molecule id="Q69AB2-2"/>
</dbReference>
<dbReference type="Antibodypedia" id="48474">
    <property type="antibodies" value="31 antibodies from 9 providers"/>
</dbReference>
<dbReference type="DNASU" id="67402"/>
<dbReference type="Ensembl" id="ENSMUST00000102897.11">
    <molecule id="Q69AB2-1"/>
    <property type="protein sequence ID" value="ENSMUSP00000099961.5"/>
    <property type="gene ID" value="ENSMUSG00000038709.16"/>
</dbReference>
<dbReference type="Ensembl" id="ENSMUST00000239406.2">
    <molecule id="Q69AB2-2"/>
    <property type="protein sequence ID" value="ENSMUSP00000159291.2"/>
    <property type="gene ID" value="ENSMUSG00000038709.16"/>
</dbReference>
<dbReference type="GeneID" id="67402"/>
<dbReference type="KEGG" id="mmu:67402"/>
<dbReference type="AGR" id="MGI:1914652"/>
<dbReference type="CTD" id="255220"/>
<dbReference type="MGI" id="MGI:1914652">
    <property type="gene designation" value="Txndc8"/>
</dbReference>
<dbReference type="VEuPathDB" id="HostDB:ENSMUSG00000038709"/>
<dbReference type="eggNOG" id="KOG0907">
    <property type="taxonomic scope" value="Eukaryota"/>
</dbReference>
<dbReference type="GeneTree" id="ENSGT00940000162445"/>
<dbReference type="HOGENOM" id="CLU_090389_14_6_1"/>
<dbReference type="InParanoid" id="Q69AB2"/>
<dbReference type="OMA" id="RIICCYG"/>
<dbReference type="OrthoDB" id="2121326at2759"/>
<dbReference type="TreeFam" id="TF321403"/>
<dbReference type="BioGRID-ORCS" id="67402">
    <property type="hits" value="2 hits in 80 CRISPR screens"/>
</dbReference>
<dbReference type="ChiTaRS" id="Txndc8">
    <property type="organism name" value="mouse"/>
</dbReference>
<dbReference type="PRO" id="PR:Q69AB2"/>
<dbReference type="Proteomes" id="UP000000589">
    <property type="component" value="Chromosome 4"/>
</dbReference>
<dbReference type="RNAct" id="Q69AB2">
    <property type="molecule type" value="protein"/>
</dbReference>
<dbReference type="Bgee" id="ENSMUSG00000038709">
    <property type="expression patterns" value="Expressed in spermatid and 13 other cell types or tissues"/>
</dbReference>
<dbReference type="ExpressionAtlas" id="Q69AB2">
    <property type="expression patterns" value="baseline and differential"/>
</dbReference>
<dbReference type="GO" id="GO:0001669">
    <property type="term" value="C:acrosomal vesicle"/>
    <property type="evidence" value="ECO:0000314"/>
    <property type="project" value="UniProtKB"/>
</dbReference>
<dbReference type="GO" id="GO:0005794">
    <property type="term" value="C:Golgi apparatus"/>
    <property type="evidence" value="ECO:0000314"/>
    <property type="project" value="UniProtKB"/>
</dbReference>
<dbReference type="GO" id="GO:0030154">
    <property type="term" value="P:cell differentiation"/>
    <property type="evidence" value="ECO:0007669"/>
    <property type="project" value="UniProtKB-KW"/>
</dbReference>
<dbReference type="GO" id="GO:0007283">
    <property type="term" value="P:spermatogenesis"/>
    <property type="evidence" value="ECO:0007669"/>
    <property type="project" value="UniProtKB-KW"/>
</dbReference>
<dbReference type="CDD" id="cd02947">
    <property type="entry name" value="TRX_family"/>
    <property type="match status" value="1"/>
</dbReference>
<dbReference type="FunFam" id="3.40.30.10:FF:000262">
    <property type="entry name" value="Thioredoxin domain containing 8"/>
    <property type="match status" value="1"/>
</dbReference>
<dbReference type="Gene3D" id="3.40.30.10">
    <property type="entry name" value="Glutaredoxin"/>
    <property type="match status" value="1"/>
</dbReference>
<dbReference type="InterPro" id="IPR036249">
    <property type="entry name" value="Thioredoxin-like_sf"/>
</dbReference>
<dbReference type="InterPro" id="IPR017937">
    <property type="entry name" value="Thioredoxin_CS"/>
</dbReference>
<dbReference type="InterPro" id="IPR013766">
    <property type="entry name" value="Thioredoxin_domain"/>
</dbReference>
<dbReference type="PANTHER" id="PTHR46115">
    <property type="entry name" value="THIOREDOXIN-LIKE PROTEIN 1"/>
    <property type="match status" value="1"/>
</dbReference>
<dbReference type="Pfam" id="PF00085">
    <property type="entry name" value="Thioredoxin"/>
    <property type="match status" value="1"/>
</dbReference>
<dbReference type="PRINTS" id="PR00421">
    <property type="entry name" value="THIOREDOXIN"/>
</dbReference>
<dbReference type="SUPFAM" id="SSF52833">
    <property type="entry name" value="Thioredoxin-like"/>
    <property type="match status" value="1"/>
</dbReference>
<dbReference type="PROSITE" id="PS00194">
    <property type="entry name" value="THIOREDOXIN_1"/>
    <property type="match status" value="1"/>
</dbReference>
<dbReference type="PROSITE" id="PS51352">
    <property type="entry name" value="THIOREDOXIN_2"/>
    <property type="match status" value="1"/>
</dbReference>
<feature type="chain" id="PRO_0000120163" description="Thioredoxin domain-containing protein 8">
    <location>
        <begin position="1"/>
        <end position="127"/>
    </location>
</feature>
<feature type="domain" description="Thioredoxin" evidence="2">
    <location>
        <begin position="2"/>
        <end position="127"/>
    </location>
</feature>
<feature type="disulfide bond" description="Redox-active" evidence="2">
    <location>
        <begin position="32"/>
        <end position="35"/>
    </location>
</feature>
<feature type="splice variant" id="VSP_014334" description="In isoform 2." evidence="5">
    <original>M</original>
    <variation>MMNGTATVILHLNQQERVSSKSQMLIM</variation>
    <location>
        <position position="1"/>
    </location>
</feature>
<feature type="sequence conflict" description="In Ref. 2; BAB24702." evidence="6" ref="2">
    <original>M</original>
    <variation>R</variation>
    <location sequence="Q69AB2-2">
        <position position="2"/>
    </location>
</feature>
<gene>
    <name type="primary">Txndc8</name>
    <name type="synonym">Sptrx3</name>
    <name type="synonym">Trx6</name>
</gene>
<organism>
    <name type="scientific">Mus musculus</name>
    <name type="common">Mouse</name>
    <dbReference type="NCBI Taxonomy" id="10090"/>
    <lineage>
        <taxon>Eukaryota</taxon>
        <taxon>Metazoa</taxon>
        <taxon>Chordata</taxon>
        <taxon>Craniata</taxon>
        <taxon>Vertebrata</taxon>
        <taxon>Euteleostomi</taxon>
        <taxon>Mammalia</taxon>
        <taxon>Eutheria</taxon>
        <taxon>Euarchontoglires</taxon>
        <taxon>Glires</taxon>
        <taxon>Rodentia</taxon>
        <taxon>Myomorpha</taxon>
        <taxon>Muroidea</taxon>
        <taxon>Muridae</taxon>
        <taxon>Murinae</taxon>
        <taxon>Mus</taxon>
        <taxon>Mus</taxon>
    </lineage>
</organism>
<sequence length="127" mass="14517">MVKRIKNMSELKELFSDAGNKLVVVEFSAKWCGPCKTIAPVFQAMSLKYQNVTFAQVDVDSSKELAEHCDITMLPTFQMFKYTQKVTPFSRLKRVLCCLRSGPKSKMIFECHGADAKQLEKKIQELM</sequence>
<reference key="1">
    <citation type="journal article" date="2004" name="J. Biol. Chem.">
        <title>Spermatocyte/spermatid-specific thioredoxin-3, a novel Golgi apparatus-associated thioredoxin, is a specific marker of aberrant spermatogenesis.</title>
        <authorList>
            <person name="Jimenez A."/>
            <person name="Zu W."/>
            <person name="Rawe V.Y."/>
            <person name="Pelto-Huikko M."/>
            <person name="Flickinger C.J."/>
            <person name="Sutovsky P."/>
            <person name="Gustafsson J.-A."/>
            <person name="Oko R."/>
            <person name="Miranda-Vizuete A."/>
        </authorList>
    </citation>
    <scope>NUCLEOTIDE SEQUENCE [MRNA] (ISOFORM 1)</scope>
    <scope>SUBCELLULAR LOCATION</scope>
    <scope>TISSUE SPECIFICITY</scope>
</reference>
<reference key="2">
    <citation type="journal article" date="2005" name="Science">
        <title>The transcriptional landscape of the mammalian genome.</title>
        <authorList>
            <person name="Carninci P."/>
            <person name="Kasukawa T."/>
            <person name="Katayama S."/>
            <person name="Gough J."/>
            <person name="Frith M.C."/>
            <person name="Maeda N."/>
            <person name="Oyama R."/>
            <person name="Ravasi T."/>
            <person name="Lenhard B."/>
            <person name="Wells C."/>
            <person name="Kodzius R."/>
            <person name="Shimokawa K."/>
            <person name="Bajic V.B."/>
            <person name="Brenner S.E."/>
            <person name="Batalov S."/>
            <person name="Forrest A.R."/>
            <person name="Zavolan M."/>
            <person name="Davis M.J."/>
            <person name="Wilming L.G."/>
            <person name="Aidinis V."/>
            <person name="Allen J.E."/>
            <person name="Ambesi-Impiombato A."/>
            <person name="Apweiler R."/>
            <person name="Aturaliya R.N."/>
            <person name="Bailey T.L."/>
            <person name="Bansal M."/>
            <person name="Baxter L."/>
            <person name="Beisel K.W."/>
            <person name="Bersano T."/>
            <person name="Bono H."/>
            <person name="Chalk A.M."/>
            <person name="Chiu K.P."/>
            <person name="Choudhary V."/>
            <person name="Christoffels A."/>
            <person name="Clutterbuck D.R."/>
            <person name="Crowe M.L."/>
            <person name="Dalla E."/>
            <person name="Dalrymple B.P."/>
            <person name="de Bono B."/>
            <person name="Della Gatta G."/>
            <person name="di Bernardo D."/>
            <person name="Down T."/>
            <person name="Engstrom P."/>
            <person name="Fagiolini M."/>
            <person name="Faulkner G."/>
            <person name="Fletcher C.F."/>
            <person name="Fukushima T."/>
            <person name="Furuno M."/>
            <person name="Futaki S."/>
            <person name="Gariboldi M."/>
            <person name="Georgii-Hemming P."/>
            <person name="Gingeras T.R."/>
            <person name="Gojobori T."/>
            <person name="Green R.E."/>
            <person name="Gustincich S."/>
            <person name="Harbers M."/>
            <person name="Hayashi Y."/>
            <person name="Hensch T.K."/>
            <person name="Hirokawa N."/>
            <person name="Hill D."/>
            <person name="Huminiecki L."/>
            <person name="Iacono M."/>
            <person name="Ikeo K."/>
            <person name="Iwama A."/>
            <person name="Ishikawa T."/>
            <person name="Jakt M."/>
            <person name="Kanapin A."/>
            <person name="Katoh M."/>
            <person name="Kawasawa Y."/>
            <person name="Kelso J."/>
            <person name="Kitamura H."/>
            <person name="Kitano H."/>
            <person name="Kollias G."/>
            <person name="Krishnan S.P."/>
            <person name="Kruger A."/>
            <person name="Kummerfeld S.K."/>
            <person name="Kurochkin I.V."/>
            <person name="Lareau L.F."/>
            <person name="Lazarevic D."/>
            <person name="Lipovich L."/>
            <person name="Liu J."/>
            <person name="Liuni S."/>
            <person name="McWilliam S."/>
            <person name="Madan Babu M."/>
            <person name="Madera M."/>
            <person name="Marchionni L."/>
            <person name="Matsuda H."/>
            <person name="Matsuzawa S."/>
            <person name="Miki H."/>
            <person name="Mignone F."/>
            <person name="Miyake S."/>
            <person name="Morris K."/>
            <person name="Mottagui-Tabar S."/>
            <person name="Mulder N."/>
            <person name="Nakano N."/>
            <person name="Nakauchi H."/>
            <person name="Ng P."/>
            <person name="Nilsson R."/>
            <person name="Nishiguchi S."/>
            <person name="Nishikawa S."/>
            <person name="Nori F."/>
            <person name="Ohara O."/>
            <person name="Okazaki Y."/>
            <person name="Orlando V."/>
            <person name="Pang K.C."/>
            <person name="Pavan W.J."/>
            <person name="Pavesi G."/>
            <person name="Pesole G."/>
            <person name="Petrovsky N."/>
            <person name="Piazza S."/>
            <person name="Reed J."/>
            <person name="Reid J.F."/>
            <person name="Ring B.Z."/>
            <person name="Ringwald M."/>
            <person name="Rost B."/>
            <person name="Ruan Y."/>
            <person name="Salzberg S.L."/>
            <person name="Sandelin A."/>
            <person name="Schneider C."/>
            <person name="Schoenbach C."/>
            <person name="Sekiguchi K."/>
            <person name="Semple C.A."/>
            <person name="Seno S."/>
            <person name="Sessa L."/>
            <person name="Sheng Y."/>
            <person name="Shibata Y."/>
            <person name="Shimada H."/>
            <person name="Shimada K."/>
            <person name="Silva D."/>
            <person name="Sinclair B."/>
            <person name="Sperling S."/>
            <person name="Stupka E."/>
            <person name="Sugiura K."/>
            <person name="Sultana R."/>
            <person name="Takenaka Y."/>
            <person name="Taki K."/>
            <person name="Tammoja K."/>
            <person name="Tan S.L."/>
            <person name="Tang S."/>
            <person name="Taylor M.S."/>
            <person name="Tegner J."/>
            <person name="Teichmann S.A."/>
            <person name="Ueda H.R."/>
            <person name="van Nimwegen E."/>
            <person name="Verardo R."/>
            <person name="Wei C.L."/>
            <person name="Yagi K."/>
            <person name="Yamanishi H."/>
            <person name="Zabarovsky E."/>
            <person name="Zhu S."/>
            <person name="Zimmer A."/>
            <person name="Hide W."/>
            <person name="Bult C."/>
            <person name="Grimmond S.M."/>
            <person name="Teasdale R.D."/>
            <person name="Liu E.T."/>
            <person name="Brusic V."/>
            <person name="Quackenbush J."/>
            <person name="Wahlestedt C."/>
            <person name="Mattick J.S."/>
            <person name="Hume D.A."/>
            <person name="Kai C."/>
            <person name="Sasaki D."/>
            <person name="Tomaru Y."/>
            <person name="Fukuda S."/>
            <person name="Kanamori-Katayama M."/>
            <person name="Suzuki M."/>
            <person name="Aoki J."/>
            <person name="Arakawa T."/>
            <person name="Iida J."/>
            <person name="Imamura K."/>
            <person name="Itoh M."/>
            <person name="Kato T."/>
            <person name="Kawaji H."/>
            <person name="Kawagashira N."/>
            <person name="Kawashima T."/>
            <person name="Kojima M."/>
            <person name="Kondo S."/>
            <person name="Konno H."/>
            <person name="Nakano K."/>
            <person name="Ninomiya N."/>
            <person name="Nishio T."/>
            <person name="Okada M."/>
            <person name="Plessy C."/>
            <person name="Shibata K."/>
            <person name="Shiraki T."/>
            <person name="Suzuki S."/>
            <person name="Tagami M."/>
            <person name="Waki K."/>
            <person name="Watahiki A."/>
            <person name="Okamura-Oho Y."/>
            <person name="Suzuki H."/>
            <person name="Kawai J."/>
            <person name="Hayashizaki Y."/>
        </authorList>
    </citation>
    <scope>NUCLEOTIDE SEQUENCE [LARGE SCALE MRNA] (ISOFORM 2)</scope>
    <source>
        <strain>C57BL/6J</strain>
        <tissue>Testis</tissue>
    </source>
</reference>
<reference key="3">
    <citation type="journal article" date="2004" name="Genome Res.">
        <title>The status, quality, and expansion of the NIH full-length cDNA project: the Mammalian Gene Collection (MGC).</title>
        <authorList>
            <consortium name="The MGC Project Team"/>
        </authorList>
    </citation>
    <scope>PARTIAL NUCLEOTIDE SEQUENCE [LARGE SCALE MRNA] (ISOFORM 2)</scope>
    <source>
        <tissue>Testis</tissue>
    </source>
</reference>
<reference key="4">
    <citation type="journal article" date="2005" name="Biochem. Biophys. Res. Commun.">
        <title>Absolute mRNA levels and transcriptional regulation of the mouse testis-specific thioredoxins.</title>
        <authorList>
            <person name="Jimenez A."/>
            <person name="Prieto-Alamo M.J."/>
            <person name="Fuentes-Almagro C.A."/>
            <person name="Jurado J."/>
            <person name="Gustafsson J.-A."/>
            <person name="Pueyo C."/>
            <person name="Miranda-Vizuete A."/>
        </authorList>
    </citation>
    <scope>DEVELOPMENTAL STAGE</scope>
</reference>
<reference key="5">
    <citation type="journal article" date="2010" name="Cell">
        <title>A tissue-specific atlas of mouse protein phosphorylation and expression.</title>
        <authorList>
            <person name="Huttlin E.L."/>
            <person name="Jedrychowski M.P."/>
            <person name="Elias J.E."/>
            <person name="Goswami T."/>
            <person name="Rad R."/>
            <person name="Beausoleil S.A."/>
            <person name="Villen J."/>
            <person name="Haas W."/>
            <person name="Sowa M.E."/>
            <person name="Gygi S.P."/>
        </authorList>
    </citation>
    <scope>IDENTIFICATION BY MASS SPECTROMETRY [LARGE SCALE ANALYSIS]</scope>
    <source>
        <tissue>Testis</tissue>
    </source>
</reference>
<name>TXND8_MOUSE</name>
<keyword id="KW-0025">Alternative splicing</keyword>
<keyword id="KW-0963">Cytoplasm</keyword>
<keyword id="KW-0217">Developmental protein</keyword>
<keyword id="KW-0221">Differentiation</keyword>
<keyword id="KW-1015">Disulfide bond</keyword>
<keyword id="KW-0333">Golgi apparatus</keyword>
<keyword id="KW-0676">Redox-active center</keyword>
<keyword id="KW-1185">Reference proteome</keyword>
<keyword id="KW-0744">Spermatogenesis</keyword>
<protein>
    <recommendedName>
        <fullName>Thioredoxin domain-containing protein 8</fullName>
    </recommendedName>
    <alternativeName>
        <fullName>Spermatid-specific thioredoxin-3</fullName>
        <shortName>Sptrx-3</shortName>
    </alternativeName>
    <alternativeName>
        <fullName>Thioredoxin-6</fullName>
    </alternativeName>
</protein>
<comment type="function">
    <text evidence="1">May be required for post-translational modifications of proteins required for acrosomal biogenesis. May act by reducing disulfide bonds within the sperm (By similarity).</text>
</comment>
<comment type="subcellular location">
    <subcellularLocation>
        <location evidence="3">Cytoplasm</location>
    </subcellularLocation>
    <subcellularLocation>
        <location evidence="3">Golgi apparatus</location>
    </subcellularLocation>
</comment>
<comment type="alternative products">
    <event type="alternative splicing"/>
    <isoform>
        <id>Q69AB2-1</id>
        <name>1</name>
        <sequence type="displayed"/>
    </isoform>
    <isoform>
        <id>Q69AB2-2</id>
        <name>2</name>
        <sequence type="described" ref="VSP_014334"/>
    </isoform>
</comment>
<comment type="tissue specificity">
    <text evidence="3">Testis-specific. Only expressed during spermiogenesis, prominently in the Golgi apparatus of pachytene spermatocytes and round and elongated spermatids, with a transient localization in the developing acrosome of round spermatids (at protein level).</text>
</comment>
<comment type="developmental stage">
    <text evidence="4">First expressed after puberty.</text>
</comment>
<comment type="similarity">
    <text evidence="6">Belongs to the thioredoxin family.</text>
</comment>
<comment type="sequence caution" evidence="6">
    <conflict type="erroneous initiation">
        <sequence resource="EMBL-CDS" id="BAB24702"/>
    </conflict>
</comment>